<feature type="chain" id="PRO_1000070237" description="Beta-ketoacyl-[acyl-carrier-protein] synthase III">
    <location>
        <begin position="1"/>
        <end position="325"/>
    </location>
</feature>
<feature type="region of interest" description="ACP-binding" evidence="1">
    <location>
        <begin position="253"/>
        <end position="257"/>
    </location>
</feature>
<feature type="active site" evidence="1">
    <location>
        <position position="119"/>
    </location>
</feature>
<feature type="active site" evidence="1">
    <location>
        <position position="252"/>
    </location>
</feature>
<feature type="active site" evidence="1">
    <location>
        <position position="282"/>
    </location>
</feature>
<protein>
    <recommendedName>
        <fullName evidence="1">Beta-ketoacyl-[acyl-carrier-protein] synthase III</fullName>
        <shortName evidence="1">Beta-ketoacyl-ACP synthase III</shortName>
        <shortName evidence="1">KAS III</shortName>
        <ecNumber evidence="1">2.3.1.180</ecNumber>
    </recommendedName>
    <alternativeName>
        <fullName evidence="1">3-oxoacyl-[acyl-carrier-protein] synthase 3</fullName>
    </alternativeName>
    <alternativeName>
        <fullName evidence="1">3-oxoacyl-[acyl-carrier-protein] synthase III</fullName>
    </alternativeName>
</protein>
<dbReference type="EC" id="2.3.1.180" evidence="1"/>
<dbReference type="EMBL" id="CP000316">
    <property type="protein sequence ID" value="ABE45554.1"/>
    <property type="molecule type" value="Genomic_DNA"/>
</dbReference>
<dbReference type="RefSeq" id="WP_011484546.1">
    <property type="nucleotide sequence ID" value="NC_007948.1"/>
</dbReference>
<dbReference type="SMR" id="Q126I8"/>
<dbReference type="STRING" id="296591.Bpro_3650"/>
<dbReference type="KEGG" id="pol:Bpro_3650"/>
<dbReference type="eggNOG" id="COG0332">
    <property type="taxonomic scope" value="Bacteria"/>
</dbReference>
<dbReference type="HOGENOM" id="CLU_039592_3_1_4"/>
<dbReference type="OrthoDB" id="9815506at2"/>
<dbReference type="UniPathway" id="UPA00094"/>
<dbReference type="Proteomes" id="UP000001983">
    <property type="component" value="Chromosome"/>
</dbReference>
<dbReference type="GO" id="GO:0005737">
    <property type="term" value="C:cytoplasm"/>
    <property type="evidence" value="ECO:0007669"/>
    <property type="project" value="UniProtKB-SubCell"/>
</dbReference>
<dbReference type="GO" id="GO:0004315">
    <property type="term" value="F:3-oxoacyl-[acyl-carrier-protein] synthase activity"/>
    <property type="evidence" value="ECO:0007669"/>
    <property type="project" value="InterPro"/>
</dbReference>
<dbReference type="GO" id="GO:0033818">
    <property type="term" value="F:beta-ketoacyl-acyl-carrier-protein synthase III activity"/>
    <property type="evidence" value="ECO:0007669"/>
    <property type="project" value="UniProtKB-UniRule"/>
</dbReference>
<dbReference type="GO" id="GO:0006633">
    <property type="term" value="P:fatty acid biosynthetic process"/>
    <property type="evidence" value="ECO:0007669"/>
    <property type="project" value="UniProtKB-UniRule"/>
</dbReference>
<dbReference type="CDD" id="cd00830">
    <property type="entry name" value="KAS_III"/>
    <property type="match status" value="1"/>
</dbReference>
<dbReference type="FunFam" id="3.40.47.10:FF:000004">
    <property type="entry name" value="3-oxoacyl-[acyl-carrier-protein] synthase 3"/>
    <property type="match status" value="1"/>
</dbReference>
<dbReference type="Gene3D" id="3.40.47.10">
    <property type="match status" value="1"/>
</dbReference>
<dbReference type="HAMAP" id="MF_01815">
    <property type="entry name" value="FabH"/>
    <property type="match status" value="1"/>
</dbReference>
<dbReference type="InterPro" id="IPR013747">
    <property type="entry name" value="ACP_syn_III_C"/>
</dbReference>
<dbReference type="InterPro" id="IPR013751">
    <property type="entry name" value="ACP_syn_III_N"/>
</dbReference>
<dbReference type="InterPro" id="IPR004655">
    <property type="entry name" value="FabH"/>
</dbReference>
<dbReference type="InterPro" id="IPR016039">
    <property type="entry name" value="Thiolase-like"/>
</dbReference>
<dbReference type="NCBIfam" id="TIGR00747">
    <property type="entry name" value="fabH"/>
    <property type="match status" value="1"/>
</dbReference>
<dbReference type="NCBIfam" id="NF006829">
    <property type="entry name" value="PRK09352.1"/>
    <property type="match status" value="1"/>
</dbReference>
<dbReference type="PANTHER" id="PTHR43091">
    <property type="entry name" value="3-OXOACYL-[ACYL-CARRIER-PROTEIN] SYNTHASE"/>
    <property type="match status" value="1"/>
</dbReference>
<dbReference type="PANTHER" id="PTHR43091:SF1">
    <property type="entry name" value="BETA-KETOACYL-[ACYL-CARRIER-PROTEIN] SYNTHASE III, CHLOROPLASTIC"/>
    <property type="match status" value="1"/>
</dbReference>
<dbReference type="Pfam" id="PF08545">
    <property type="entry name" value="ACP_syn_III"/>
    <property type="match status" value="1"/>
</dbReference>
<dbReference type="Pfam" id="PF08541">
    <property type="entry name" value="ACP_syn_III_C"/>
    <property type="match status" value="1"/>
</dbReference>
<dbReference type="SUPFAM" id="SSF53901">
    <property type="entry name" value="Thiolase-like"/>
    <property type="match status" value="1"/>
</dbReference>
<sequence>MTRYSRITGTGSYLPPRRLTNAELAAELATKGVETSDEWIVERTGIRARHFAAPDVSSSDLAVKAARHALEAAGRQASDIDLIIVATSTPDMVFPSAACIVQNKLGIAGCPAFDVQAVCSGFVYALTVADALIKTGSATKALVIGAEVFSRILDFSDRTTCVLFGDGAGAVVLEASETPGILASDLHADGKHVGILCVPGNVSGGQVLGDPLLKMDGQAVFKLAVGVLESSARAALAKANLRDTDIDWLIPHQANIRIMQSTAKKLKVPPEKLIVTVDEHGNTSAASIPLALDASVRSGKVKKGDTLMLEGVGGGFTWGAVLLNY</sequence>
<organism>
    <name type="scientific">Polaromonas sp. (strain JS666 / ATCC BAA-500)</name>
    <dbReference type="NCBI Taxonomy" id="296591"/>
    <lineage>
        <taxon>Bacteria</taxon>
        <taxon>Pseudomonadati</taxon>
        <taxon>Pseudomonadota</taxon>
        <taxon>Betaproteobacteria</taxon>
        <taxon>Burkholderiales</taxon>
        <taxon>Comamonadaceae</taxon>
        <taxon>Polaromonas</taxon>
    </lineage>
</organism>
<reference key="1">
    <citation type="journal article" date="2008" name="Appl. Environ. Microbiol.">
        <title>The genome of Polaromonas sp. strain JS666: insights into the evolution of a hydrocarbon- and xenobiotic-degrading bacterium, and features of relevance to biotechnology.</title>
        <authorList>
            <person name="Mattes T.E."/>
            <person name="Alexander A.K."/>
            <person name="Richardson P.M."/>
            <person name="Munk A.C."/>
            <person name="Han C.S."/>
            <person name="Stothard P."/>
            <person name="Coleman N.V."/>
        </authorList>
    </citation>
    <scope>NUCLEOTIDE SEQUENCE [LARGE SCALE GENOMIC DNA]</scope>
    <source>
        <strain>JS666 / ATCC BAA-500</strain>
    </source>
</reference>
<name>FABH_POLSJ</name>
<evidence type="ECO:0000255" key="1">
    <source>
        <dbReference type="HAMAP-Rule" id="MF_01815"/>
    </source>
</evidence>
<comment type="function">
    <text evidence="1">Catalyzes the condensation reaction of fatty acid synthesis by the addition to an acyl acceptor of two carbons from malonyl-ACP. Catalyzes the first condensation reaction which initiates fatty acid synthesis and may therefore play a role in governing the total rate of fatty acid production. Possesses both acetoacetyl-ACP synthase and acetyl transacylase activities. Its substrate specificity determines the biosynthesis of branched-chain and/or straight-chain of fatty acids.</text>
</comment>
<comment type="catalytic activity">
    <reaction evidence="1">
        <text>malonyl-[ACP] + acetyl-CoA + H(+) = 3-oxobutanoyl-[ACP] + CO2 + CoA</text>
        <dbReference type="Rhea" id="RHEA:12080"/>
        <dbReference type="Rhea" id="RHEA-COMP:9623"/>
        <dbReference type="Rhea" id="RHEA-COMP:9625"/>
        <dbReference type="ChEBI" id="CHEBI:15378"/>
        <dbReference type="ChEBI" id="CHEBI:16526"/>
        <dbReference type="ChEBI" id="CHEBI:57287"/>
        <dbReference type="ChEBI" id="CHEBI:57288"/>
        <dbReference type="ChEBI" id="CHEBI:78449"/>
        <dbReference type="ChEBI" id="CHEBI:78450"/>
        <dbReference type="EC" id="2.3.1.180"/>
    </reaction>
</comment>
<comment type="pathway">
    <text evidence="1">Lipid metabolism; fatty acid biosynthesis.</text>
</comment>
<comment type="subunit">
    <text evidence="1">Homodimer.</text>
</comment>
<comment type="subcellular location">
    <subcellularLocation>
        <location evidence="1">Cytoplasm</location>
    </subcellularLocation>
</comment>
<comment type="domain">
    <text evidence="1">The last Arg residue of the ACP-binding site is essential for the weak association between ACP/AcpP and FabH.</text>
</comment>
<comment type="similarity">
    <text evidence="1">Belongs to the thiolase-like superfamily. FabH family.</text>
</comment>
<keyword id="KW-0012">Acyltransferase</keyword>
<keyword id="KW-0963">Cytoplasm</keyword>
<keyword id="KW-0275">Fatty acid biosynthesis</keyword>
<keyword id="KW-0276">Fatty acid metabolism</keyword>
<keyword id="KW-0444">Lipid biosynthesis</keyword>
<keyword id="KW-0443">Lipid metabolism</keyword>
<keyword id="KW-0511">Multifunctional enzyme</keyword>
<keyword id="KW-1185">Reference proteome</keyword>
<keyword id="KW-0808">Transferase</keyword>
<accession>Q126I8</accession>
<proteinExistence type="inferred from homology"/>
<gene>
    <name evidence="1" type="primary">fabH</name>
    <name type="ordered locus">Bpro_3650</name>
</gene>